<proteinExistence type="inferred from homology"/>
<organism>
    <name type="scientific">Salmonella typhimurium (strain LT2 / SGSC1412 / ATCC 700720)</name>
    <dbReference type="NCBI Taxonomy" id="99287"/>
    <lineage>
        <taxon>Bacteria</taxon>
        <taxon>Pseudomonadati</taxon>
        <taxon>Pseudomonadota</taxon>
        <taxon>Gammaproteobacteria</taxon>
        <taxon>Enterobacterales</taxon>
        <taxon>Enterobacteriaceae</taxon>
        <taxon>Salmonella</taxon>
    </lineage>
</organism>
<accession>Q8ZRB6</accession>
<feature type="chain" id="PRO_0000342993" description="HMP-PP phosphatase">
    <location>
        <begin position="1"/>
        <end position="272"/>
    </location>
</feature>
<feature type="active site" description="Nucleophile" evidence="1">
    <location>
        <position position="8"/>
    </location>
</feature>
<feature type="binding site" evidence="1">
    <location>
        <position position="8"/>
    </location>
    <ligand>
        <name>Mg(2+)</name>
        <dbReference type="ChEBI" id="CHEBI:18420"/>
    </ligand>
</feature>
<feature type="binding site" evidence="1">
    <location>
        <position position="10"/>
    </location>
    <ligand>
        <name>Mg(2+)</name>
        <dbReference type="ChEBI" id="CHEBI:18420"/>
    </ligand>
</feature>
<feature type="binding site" evidence="1">
    <location>
        <position position="212"/>
    </location>
    <ligand>
        <name>Mg(2+)</name>
        <dbReference type="ChEBI" id="CHEBI:18420"/>
    </ligand>
</feature>
<evidence type="ECO:0000255" key="1">
    <source>
        <dbReference type="HAMAP-Rule" id="MF_01847"/>
    </source>
</evidence>
<name>COF_SALTY</name>
<protein>
    <recommendedName>
        <fullName evidence="1">HMP-PP phosphatase</fullName>
        <ecNumber evidence="1">3.6.1.-</ecNumber>
    </recommendedName>
</protein>
<keyword id="KW-0378">Hydrolase</keyword>
<keyword id="KW-0460">Magnesium</keyword>
<keyword id="KW-0479">Metal-binding</keyword>
<keyword id="KW-1185">Reference proteome</keyword>
<gene>
    <name evidence="1" type="primary">cof</name>
    <name type="ordered locus">STM0457</name>
</gene>
<comment type="function">
    <text evidence="1">Catalyzes the hydrolysis of 4-amino-2-methyl-5-hydroxymethylpyrimidine pyrophosphate (HMP-PP) to 4-amino-2-methyl-5-hydroxymethylpyrimidine phosphate (HMP-P).</text>
</comment>
<comment type="catalytic activity">
    <reaction evidence="1">
        <text>4-amino-2-methyl-5-(diphosphooxymethyl)pyrimidine + H2O = 4-amino-2-methyl-5-(phosphooxymethyl)pyrimidine + phosphate + H(+)</text>
        <dbReference type="Rhea" id="RHEA:27914"/>
        <dbReference type="ChEBI" id="CHEBI:15377"/>
        <dbReference type="ChEBI" id="CHEBI:15378"/>
        <dbReference type="ChEBI" id="CHEBI:43474"/>
        <dbReference type="ChEBI" id="CHEBI:57841"/>
        <dbReference type="ChEBI" id="CHEBI:58354"/>
    </reaction>
</comment>
<comment type="cofactor">
    <cofactor evidence="1">
        <name>Mg(2+)</name>
        <dbReference type="ChEBI" id="CHEBI:18420"/>
    </cofactor>
</comment>
<comment type="similarity">
    <text evidence="1">Belongs to the HAD-like hydrolase superfamily. Cof family.</text>
</comment>
<sequence length="272" mass="30104">MARLAAFDMDGTLLMPDHHLGRETIATLARLRERDITLTFATGRHVLEMRHILGTLSLDAYLITGNGTRIHSLEGDVLHRQDLDPQVADTVMHHAWDTRASMHVFNDNGWFTGQEIPALLQAHVYSGFRYQVIDIKSIPAHQVTKICFCGDHDDLIRLRIQLNEALEERAHLCFSAVDCLEVLPLGCNKGSALAVLSNHLGLSLADCMAFGDAMNDREMLGSVGRGLIMGNAMPQLIAALPHLSVIGHCGNQAVSHFLTHWLDNPHLPYSPE</sequence>
<dbReference type="EC" id="3.6.1.-" evidence="1"/>
<dbReference type="EMBL" id="AE006468">
    <property type="protein sequence ID" value="AAL19412.1"/>
    <property type="molecule type" value="Genomic_DNA"/>
</dbReference>
<dbReference type="RefSeq" id="NP_459453.1">
    <property type="nucleotide sequence ID" value="NC_003197.2"/>
</dbReference>
<dbReference type="RefSeq" id="WP_000113030.1">
    <property type="nucleotide sequence ID" value="NC_003197.2"/>
</dbReference>
<dbReference type="SMR" id="Q8ZRB6"/>
<dbReference type="STRING" id="99287.STM0457"/>
<dbReference type="PaxDb" id="99287-STM0457"/>
<dbReference type="GeneID" id="1251977"/>
<dbReference type="KEGG" id="stm:STM0457"/>
<dbReference type="PATRIC" id="fig|99287.12.peg.489"/>
<dbReference type="HOGENOM" id="CLU_044146_5_2_6"/>
<dbReference type="OMA" id="CFSAMDC"/>
<dbReference type="PhylomeDB" id="Q8ZRB6"/>
<dbReference type="BioCyc" id="SENT99287:STM0457-MONOMER"/>
<dbReference type="Proteomes" id="UP000001014">
    <property type="component" value="Chromosome"/>
</dbReference>
<dbReference type="GO" id="GO:0002145">
    <property type="term" value="F:4-amino-5-hydroxymethyl-2-methylpyrimidine diphosphatase activity"/>
    <property type="evidence" value="ECO:0007669"/>
    <property type="project" value="RHEA"/>
</dbReference>
<dbReference type="GO" id="GO:0000287">
    <property type="term" value="F:magnesium ion binding"/>
    <property type="evidence" value="ECO:0000250"/>
    <property type="project" value="UniProtKB"/>
</dbReference>
<dbReference type="GO" id="GO:0016791">
    <property type="term" value="F:phosphatase activity"/>
    <property type="evidence" value="ECO:0000250"/>
    <property type="project" value="UniProtKB"/>
</dbReference>
<dbReference type="CDD" id="cd07516">
    <property type="entry name" value="HAD_Pase"/>
    <property type="match status" value="1"/>
</dbReference>
<dbReference type="FunFam" id="3.30.1240.10:FF:000002">
    <property type="entry name" value="HMP-PP phosphatase"/>
    <property type="match status" value="1"/>
</dbReference>
<dbReference type="Gene3D" id="3.30.1240.10">
    <property type="match status" value="1"/>
</dbReference>
<dbReference type="Gene3D" id="3.40.50.1000">
    <property type="entry name" value="HAD superfamily/HAD-like"/>
    <property type="match status" value="1"/>
</dbReference>
<dbReference type="HAMAP" id="MF_01847">
    <property type="entry name" value="HMP_PP_phosphat"/>
    <property type="match status" value="1"/>
</dbReference>
<dbReference type="InterPro" id="IPR000150">
    <property type="entry name" value="Cof"/>
</dbReference>
<dbReference type="InterPro" id="IPR036412">
    <property type="entry name" value="HAD-like_sf"/>
</dbReference>
<dbReference type="InterPro" id="IPR006379">
    <property type="entry name" value="HAD-SF_hydro_IIB"/>
</dbReference>
<dbReference type="InterPro" id="IPR023214">
    <property type="entry name" value="HAD_sf"/>
</dbReference>
<dbReference type="InterPro" id="IPR023938">
    <property type="entry name" value="HMP-PP_phosphatase"/>
</dbReference>
<dbReference type="NCBIfam" id="TIGR00099">
    <property type="entry name" value="Cof-subfamily"/>
    <property type="match status" value="1"/>
</dbReference>
<dbReference type="NCBIfam" id="TIGR01484">
    <property type="entry name" value="HAD-SF-IIB"/>
    <property type="match status" value="1"/>
</dbReference>
<dbReference type="NCBIfam" id="NF011705">
    <property type="entry name" value="PRK15126.1"/>
    <property type="match status" value="1"/>
</dbReference>
<dbReference type="PANTHER" id="PTHR47267">
    <property type="match status" value="1"/>
</dbReference>
<dbReference type="PANTHER" id="PTHR47267:SF2">
    <property type="entry name" value="HMP-PP PHOSPHATASE"/>
    <property type="match status" value="1"/>
</dbReference>
<dbReference type="Pfam" id="PF08282">
    <property type="entry name" value="Hydrolase_3"/>
    <property type="match status" value="1"/>
</dbReference>
<dbReference type="SFLD" id="SFLDG01140">
    <property type="entry name" value="C2.B:_Phosphomannomutase_and_P"/>
    <property type="match status" value="1"/>
</dbReference>
<dbReference type="SFLD" id="SFLDS00003">
    <property type="entry name" value="Haloacid_Dehalogenase"/>
    <property type="match status" value="1"/>
</dbReference>
<dbReference type="SUPFAM" id="SSF56784">
    <property type="entry name" value="HAD-like"/>
    <property type="match status" value="1"/>
</dbReference>
<dbReference type="PROSITE" id="PS01228">
    <property type="entry name" value="COF_1"/>
    <property type="match status" value="1"/>
</dbReference>
<dbReference type="PROSITE" id="PS01229">
    <property type="entry name" value="COF_2"/>
    <property type="match status" value="1"/>
</dbReference>
<reference key="1">
    <citation type="journal article" date="2001" name="Nature">
        <title>Complete genome sequence of Salmonella enterica serovar Typhimurium LT2.</title>
        <authorList>
            <person name="McClelland M."/>
            <person name="Sanderson K.E."/>
            <person name="Spieth J."/>
            <person name="Clifton S.W."/>
            <person name="Latreille P."/>
            <person name="Courtney L."/>
            <person name="Porwollik S."/>
            <person name="Ali J."/>
            <person name="Dante M."/>
            <person name="Du F."/>
            <person name="Hou S."/>
            <person name="Layman D."/>
            <person name="Leonard S."/>
            <person name="Nguyen C."/>
            <person name="Scott K."/>
            <person name="Holmes A."/>
            <person name="Grewal N."/>
            <person name="Mulvaney E."/>
            <person name="Ryan E."/>
            <person name="Sun H."/>
            <person name="Florea L."/>
            <person name="Miller W."/>
            <person name="Stoneking T."/>
            <person name="Nhan M."/>
            <person name="Waterston R."/>
            <person name="Wilson R.K."/>
        </authorList>
    </citation>
    <scope>NUCLEOTIDE SEQUENCE [LARGE SCALE GENOMIC DNA]</scope>
    <source>
        <strain>LT2 / SGSC1412 / ATCC 700720</strain>
    </source>
</reference>